<sequence length="106" mass="11732">ADAAPTVSIFPPSMEQLTSGGATVVCFVNNFYPRDISVKWKIDGSEQRDGVLDSVTDQDSKDSTYSMSSTLSLTKVEYERHNLYTCEVVHKTSSSPVVKSFNRNEC</sequence>
<evidence type="ECO:0000255" key="1">
    <source>
        <dbReference type="PROSITE-ProRule" id="PRU00114"/>
    </source>
</evidence>
<accession>P01836</accession>
<organism>
    <name type="scientific">Rattus norvegicus</name>
    <name type="common">Rat</name>
    <dbReference type="NCBI Taxonomy" id="10116"/>
    <lineage>
        <taxon>Eukaryota</taxon>
        <taxon>Metazoa</taxon>
        <taxon>Chordata</taxon>
        <taxon>Craniata</taxon>
        <taxon>Vertebrata</taxon>
        <taxon>Euteleostomi</taxon>
        <taxon>Mammalia</taxon>
        <taxon>Eutheria</taxon>
        <taxon>Euarchontoglires</taxon>
        <taxon>Glires</taxon>
        <taxon>Rodentia</taxon>
        <taxon>Myomorpha</taxon>
        <taxon>Muroidea</taxon>
        <taxon>Muridae</taxon>
        <taxon>Murinae</taxon>
        <taxon>Rattus</taxon>
    </lineage>
</organism>
<feature type="chain" id="PRO_0000153604" description="Ig kappa chain C region, A allele">
    <location>
        <begin position="1" status="less than"/>
        <end position="106"/>
    </location>
</feature>
<feature type="domain" description="Ig-like">
    <location>
        <begin position="5"/>
        <end position="102"/>
    </location>
</feature>
<feature type="disulfide bond" evidence="1">
    <location>
        <begin position="26"/>
        <end position="86"/>
    </location>
</feature>
<feature type="disulfide bond" description="Interchain (with a heavy chain)" evidence="1">
    <location>
        <position position="106"/>
    </location>
</feature>
<feature type="non-terminal residue">
    <location>
        <position position="1"/>
    </location>
</feature>
<reference key="1">
    <citation type="journal article" date="1981" name="Proc. Natl. Acad. Sci. U.S.A.">
        <title>Allelic forms of rat kappa chain genes: evidence for strong selection at the level of nucleotide sequence.</title>
        <authorList>
            <person name="Sheppard H.W."/>
            <person name="Gutman G.A."/>
        </authorList>
    </citation>
    <scope>NUCLEOTIDE SEQUENCE [GENOMIC DNA]</scope>
    <source>
        <strain>DA</strain>
    </source>
</reference>
<keyword id="KW-0002">3D-structure</keyword>
<keyword id="KW-1015">Disulfide bond</keyword>
<keyword id="KW-0393">Immunoglobulin domain</keyword>
<keyword id="KW-1185">Reference proteome</keyword>
<proteinExistence type="evidence at protein level"/>
<name>KACA_RAT</name>
<dbReference type="PIR" id="A02118">
    <property type="entry name" value="K1RTA"/>
</dbReference>
<dbReference type="PDB" id="2ARJ">
    <property type="method" value="X-ray"/>
    <property type="resolution" value="2.88 A"/>
    <property type="chains" value="A/L=1-103"/>
</dbReference>
<dbReference type="PDB" id="3B9K">
    <property type="method" value="X-ray"/>
    <property type="resolution" value="2.70 A"/>
    <property type="chains" value="C/L=1-106"/>
</dbReference>
<dbReference type="PDBsum" id="2ARJ"/>
<dbReference type="PDBsum" id="3B9K"/>
<dbReference type="SMR" id="P01836"/>
<dbReference type="FunCoup" id="P01836">
    <property type="interactions" value="169"/>
</dbReference>
<dbReference type="AGR" id="RGD:1562743"/>
<dbReference type="RGD" id="1562743">
    <property type="gene designation" value="LOC500183"/>
</dbReference>
<dbReference type="InParanoid" id="P01836"/>
<dbReference type="PhylomeDB" id="P01836"/>
<dbReference type="PRO" id="PR:P01836"/>
<dbReference type="Proteomes" id="UP000002494">
    <property type="component" value="Unplaced"/>
</dbReference>
<dbReference type="GO" id="GO:0042105">
    <property type="term" value="C:alpha-beta T cell receptor complex"/>
    <property type="evidence" value="ECO:0000318"/>
    <property type="project" value="GO_Central"/>
</dbReference>
<dbReference type="GO" id="GO:0071735">
    <property type="term" value="C:IgG immunoglobulin complex"/>
    <property type="evidence" value="ECO:0000266"/>
    <property type="project" value="RGD"/>
</dbReference>
<dbReference type="GO" id="GO:0002250">
    <property type="term" value="P:adaptive immune response"/>
    <property type="evidence" value="ECO:0000266"/>
    <property type="project" value="RGD"/>
</dbReference>
<dbReference type="GO" id="GO:0030183">
    <property type="term" value="P:B cell differentiation"/>
    <property type="evidence" value="ECO:0000266"/>
    <property type="project" value="RGD"/>
</dbReference>
<dbReference type="CDD" id="cd07699">
    <property type="entry name" value="IgC1_L"/>
    <property type="match status" value="1"/>
</dbReference>
<dbReference type="FunFam" id="2.60.40.10:FF:000283">
    <property type="entry name" value="Immunoglobulin kappa constant"/>
    <property type="match status" value="1"/>
</dbReference>
<dbReference type="Gene3D" id="2.60.40.10">
    <property type="entry name" value="Immunoglobulins"/>
    <property type="match status" value="1"/>
</dbReference>
<dbReference type="InterPro" id="IPR007110">
    <property type="entry name" value="Ig-like_dom"/>
</dbReference>
<dbReference type="InterPro" id="IPR036179">
    <property type="entry name" value="Ig-like_dom_sf"/>
</dbReference>
<dbReference type="InterPro" id="IPR013783">
    <property type="entry name" value="Ig-like_fold"/>
</dbReference>
<dbReference type="InterPro" id="IPR003006">
    <property type="entry name" value="Ig/MHC_CS"/>
</dbReference>
<dbReference type="InterPro" id="IPR003597">
    <property type="entry name" value="Ig_C1-set"/>
</dbReference>
<dbReference type="InterPro" id="IPR050380">
    <property type="entry name" value="Immune_Resp_Modulators"/>
</dbReference>
<dbReference type="PANTHER" id="PTHR23411">
    <property type="entry name" value="TAPASIN"/>
    <property type="match status" value="1"/>
</dbReference>
<dbReference type="Pfam" id="PF07654">
    <property type="entry name" value="C1-set"/>
    <property type="match status" value="1"/>
</dbReference>
<dbReference type="SMART" id="SM00407">
    <property type="entry name" value="IGc1"/>
    <property type="match status" value="1"/>
</dbReference>
<dbReference type="SUPFAM" id="SSF48726">
    <property type="entry name" value="Immunoglobulin"/>
    <property type="match status" value="1"/>
</dbReference>
<dbReference type="PROSITE" id="PS50835">
    <property type="entry name" value="IG_LIKE"/>
    <property type="match status" value="1"/>
</dbReference>
<dbReference type="PROSITE" id="PS00290">
    <property type="entry name" value="IG_MHC"/>
    <property type="match status" value="1"/>
</dbReference>
<protein>
    <recommendedName>
        <fullName>Ig kappa chain C region, A allele</fullName>
    </recommendedName>
</protein>